<sequence>MSEHFEKRRPVFLQLGFNEAALPQLKAYLDLLWSSNEELNLISRKMTYEELIDNHVIDCLLPIKDFPKDVKVAADFGSGGGLPGVIYAIQFPNVEYHLFEKSKLKQDFLNRCVSIAPNLRIHGEIPPKLEKIEVVTSRAFKPVDVILEFSRDYYKKGGKYFLLKGRKEKIDEEVALARKKFKDLKVTVQPLSSPVLEVERHLVLI</sequence>
<gene>
    <name evidence="1" type="primary">rsmG1</name>
    <name type="ordered locus">Bd0312</name>
</gene>
<comment type="function">
    <text evidence="1">Specifically methylates the N7 position of guanine in position 527 of 16S rRNA.</text>
</comment>
<comment type="catalytic activity">
    <reaction evidence="1">
        <text>guanosine(527) in 16S rRNA + S-adenosyl-L-methionine = N(7)-methylguanosine(527) in 16S rRNA + S-adenosyl-L-homocysteine</text>
        <dbReference type="Rhea" id="RHEA:42732"/>
        <dbReference type="Rhea" id="RHEA-COMP:10209"/>
        <dbReference type="Rhea" id="RHEA-COMP:10210"/>
        <dbReference type="ChEBI" id="CHEBI:57856"/>
        <dbReference type="ChEBI" id="CHEBI:59789"/>
        <dbReference type="ChEBI" id="CHEBI:74269"/>
        <dbReference type="ChEBI" id="CHEBI:74480"/>
        <dbReference type="EC" id="2.1.1.170"/>
    </reaction>
</comment>
<comment type="subcellular location">
    <subcellularLocation>
        <location evidence="1">Cytoplasm</location>
    </subcellularLocation>
</comment>
<comment type="similarity">
    <text evidence="1">Belongs to the methyltransferase superfamily. RNA methyltransferase RsmG family.</text>
</comment>
<protein>
    <recommendedName>
        <fullName evidence="1">Ribosomal RNA small subunit methyltransferase G 1</fullName>
        <ecNumber evidence="1">2.1.1.170</ecNumber>
    </recommendedName>
    <alternativeName>
        <fullName evidence="1">16S rRNA 7-methylguanosine methyltransferase 1</fullName>
        <shortName evidence="1">16S rRNA m7G methyltransferase 1</shortName>
    </alternativeName>
</protein>
<feature type="chain" id="PRO_0000342903" description="Ribosomal RNA small subunit methyltransferase G 1">
    <location>
        <begin position="1"/>
        <end position="205"/>
    </location>
</feature>
<feature type="binding site" evidence="1">
    <location>
        <position position="77"/>
    </location>
    <ligand>
        <name>S-adenosyl-L-methionine</name>
        <dbReference type="ChEBI" id="CHEBI:59789"/>
    </ligand>
</feature>
<feature type="binding site" evidence="1">
    <location>
        <position position="82"/>
    </location>
    <ligand>
        <name>S-adenosyl-L-methionine</name>
        <dbReference type="ChEBI" id="CHEBI:59789"/>
    </ligand>
</feature>
<feature type="binding site" evidence="1">
    <location>
        <begin position="100"/>
        <end position="102"/>
    </location>
    <ligand>
        <name>S-adenosyl-L-methionine</name>
        <dbReference type="ChEBI" id="CHEBI:59789"/>
    </ligand>
</feature>
<feature type="binding site" evidence="1">
    <location>
        <begin position="129"/>
        <end position="130"/>
    </location>
    <ligand>
        <name>S-adenosyl-L-methionine</name>
        <dbReference type="ChEBI" id="CHEBI:59789"/>
    </ligand>
</feature>
<feature type="binding site" evidence="1">
    <location>
        <position position="138"/>
    </location>
    <ligand>
        <name>S-adenosyl-L-methionine</name>
        <dbReference type="ChEBI" id="CHEBI:59789"/>
    </ligand>
</feature>
<name>RSMG1_BDEBA</name>
<accession>Q6MQY9</accession>
<proteinExistence type="inferred from homology"/>
<reference key="1">
    <citation type="journal article" date="2004" name="Science">
        <title>A predator unmasked: life cycle of Bdellovibrio bacteriovorus from a genomic perspective.</title>
        <authorList>
            <person name="Rendulic S."/>
            <person name="Jagtap P."/>
            <person name="Rosinus A."/>
            <person name="Eppinger M."/>
            <person name="Baar C."/>
            <person name="Lanz C."/>
            <person name="Keller H."/>
            <person name="Lambert C."/>
            <person name="Evans K.J."/>
            <person name="Goesmann A."/>
            <person name="Meyer F."/>
            <person name="Sockett R.E."/>
            <person name="Schuster S.C."/>
        </authorList>
    </citation>
    <scope>NUCLEOTIDE SEQUENCE [LARGE SCALE GENOMIC DNA]</scope>
    <source>
        <strain>ATCC 15356 / DSM 50701 / NCIMB 9529 / HD100</strain>
    </source>
</reference>
<organism>
    <name type="scientific">Bdellovibrio bacteriovorus (strain ATCC 15356 / DSM 50701 / NCIMB 9529 / HD100)</name>
    <dbReference type="NCBI Taxonomy" id="264462"/>
    <lineage>
        <taxon>Bacteria</taxon>
        <taxon>Pseudomonadati</taxon>
        <taxon>Bdellovibrionota</taxon>
        <taxon>Bdellovibrionia</taxon>
        <taxon>Bdellovibrionales</taxon>
        <taxon>Pseudobdellovibrionaceae</taxon>
        <taxon>Bdellovibrio</taxon>
    </lineage>
</organism>
<evidence type="ECO:0000255" key="1">
    <source>
        <dbReference type="HAMAP-Rule" id="MF_00074"/>
    </source>
</evidence>
<keyword id="KW-0963">Cytoplasm</keyword>
<keyword id="KW-0489">Methyltransferase</keyword>
<keyword id="KW-1185">Reference proteome</keyword>
<keyword id="KW-0698">rRNA processing</keyword>
<keyword id="KW-0949">S-adenosyl-L-methionine</keyword>
<keyword id="KW-0808">Transferase</keyword>
<dbReference type="EC" id="2.1.1.170" evidence="1"/>
<dbReference type="EMBL" id="BX842646">
    <property type="protein sequence ID" value="CAE77969.1"/>
    <property type="molecule type" value="Genomic_DNA"/>
</dbReference>
<dbReference type="RefSeq" id="WP_011162910.1">
    <property type="nucleotide sequence ID" value="NC_005363.1"/>
</dbReference>
<dbReference type="SMR" id="Q6MQY9"/>
<dbReference type="STRING" id="264462.Bd0312"/>
<dbReference type="GeneID" id="93011445"/>
<dbReference type="KEGG" id="bba:Bd0312"/>
<dbReference type="eggNOG" id="COG0357">
    <property type="taxonomic scope" value="Bacteria"/>
</dbReference>
<dbReference type="HOGENOM" id="CLU_065341_2_0_7"/>
<dbReference type="Proteomes" id="UP000008080">
    <property type="component" value="Chromosome"/>
</dbReference>
<dbReference type="GO" id="GO:0005829">
    <property type="term" value="C:cytosol"/>
    <property type="evidence" value="ECO:0007669"/>
    <property type="project" value="TreeGrafter"/>
</dbReference>
<dbReference type="GO" id="GO:0070043">
    <property type="term" value="F:rRNA (guanine-N7-)-methyltransferase activity"/>
    <property type="evidence" value="ECO:0007669"/>
    <property type="project" value="UniProtKB-UniRule"/>
</dbReference>
<dbReference type="Gene3D" id="3.40.50.150">
    <property type="entry name" value="Vaccinia Virus protein VP39"/>
    <property type="match status" value="1"/>
</dbReference>
<dbReference type="HAMAP" id="MF_00074">
    <property type="entry name" value="16SrRNA_methyltr_G"/>
    <property type="match status" value="1"/>
</dbReference>
<dbReference type="InterPro" id="IPR003682">
    <property type="entry name" value="rRNA_ssu_MeTfrase_G"/>
</dbReference>
<dbReference type="InterPro" id="IPR029063">
    <property type="entry name" value="SAM-dependent_MTases_sf"/>
</dbReference>
<dbReference type="NCBIfam" id="TIGR00138">
    <property type="entry name" value="rsmG_gidB"/>
    <property type="match status" value="1"/>
</dbReference>
<dbReference type="PANTHER" id="PTHR31760">
    <property type="entry name" value="S-ADENOSYL-L-METHIONINE-DEPENDENT METHYLTRANSFERASES SUPERFAMILY PROTEIN"/>
    <property type="match status" value="1"/>
</dbReference>
<dbReference type="PANTHER" id="PTHR31760:SF0">
    <property type="entry name" value="S-ADENOSYL-L-METHIONINE-DEPENDENT METHYLTRANSFERASES SUPERFAMILY PROTEIN"/>
    <property type="match status" value="1"/>
</dbReference>
<dbReference type="Pfam" id="PF02527">
    <property type="entry name" value="GidB"/>
    <property type="match status" value="1"/>
</dbReference>
<dbReference type="PIRSF" id="PIRSF003078">
    <property type="entry name" value="GidB"/>
    <property type="match status" value="1"/>
</dbReference>
<dbReference type="SUPFAM" id="SSF53335">
    <property type="entry name" value="S-adenosyl-L-methionine-dependent methyltransferases"/>
    <property type="match status" value="1"/>
</dbReference>